<organism>
    <name type="scientific">Methanocaldococcus jannaschii (strain ATCC 43067 / DSM 2661 / JAL-1 / JCM 10045 / NBRC 100440)</name>
    <name type="common">Methanococcus jannaschii</name>
    <dbReference type="NCBI Taxonomy" id="243232"/>
    <lineage>
        <taxon>Archaea</taxon>
        <taxon>Methanobacteriati</taxon>
        <taxon>Methanobacteriota</taxon>
        <taxon>Methanomada group</taxon>
        <taxon>Methanococci</taxon>
        <taxon>Methanococcales</taxon>
        <taxon>Methanocaldococcaceae</taxon>
        <taxon>Methanocaldococcus</taxon>
    </lineage>
</organism>
<feature type="initiator methionine" description="Removed" evidence="1">
    <location>
        <position position="1"/>
    </location>
</feature>
<feature type="chain" id="PRO_0000056937" description="Putative asparagine synthetase [glutamine-hydrolyzing] 1">
    <location>
        <begin position="2"/>
        <end position="541"/>
    </location>
</feature>
<feature type="domain" description="Glutamine amidotransferase type-2" evidence="2">
    <location>
        <begin position="2"/>
        <end position="213"/>
    </location>
</feature>
<feature type="active site" description="For GATase activity" evidence="1">
    <location>
        <position position="2"/>
    </location>
</feature>
<feature type="binding site" evidence="1">
    <location>
        <begin position="68"/>
        <end position="72"/>
    </location>
    <ligand>
        <name>L-glutamine</name>
        <dbReference type="ChEBI" id="CHEBI:58359"/>
    </ligand>
</feature>
<feature type="binding site" evidence="1">
    <location>
        <begin position="92"/>
        <end position="94"/>
    </location>
    <ligand>
        <name>L-glutamine</name>
        <dbReference type="ChEBI" id="CHEBI:58359"/>
    </ligand>
</feature>
<feature type="binding site" evidence="1">
    <location>
        <position position="116"/>
    </location>
    <ligand>
        <name>L-glutamine</name>
        <dbReference type="ChEBI" id="CHEBI:58359"/>
    </ligand>
</feature>
<feature type="binding site" evidence="1">
    <location>
        <position position="289"/>
    </location>
    <ligand>
        <name>ATP</name>
        <dbReference type="ChEBI" id="CHEBI:30616"/>
    </ligand>
</feature>
<feature type="binding site" evidence="1">
    <location>
        <begin position="363"/>
        <end position="364"/>
    </location>
    <ligand>
        <name>ATP</name>
        <dbReference type="ChEBI" id="CHEBI:30616"/>
    </ligand>
</feature>
<sequence>MCSISGIIVKDNQISAKYSIDMMKILKHRGRDNSGLLLDDEVIYFNDFEDVEDLEEEMIGNLSLAHNRLAIVGRYGVQPIPNEDETIWLVCNGEIYNYIELREYLKQNHEFRTDSDNEVIIHLYEEEKLEELDGDYAFAIYDKSKNVVRLARDMFGVKPLFYVDRDKYFAFASERKALWHLLINIDGCERDLDELNSKIKTLKPNSQLIYYLDDNRFEIIEGFKKLELNYMKERSYEEAKEYLDRALKNSVLKRVRGLDKVGIICSGGVDSSLIAKLASLYCEVILYAVGTENSEDLIYAERLAKDLNLKLRKKIISEEEYEEYVFKVAKAIDEVDLMKIGVGIPIYVASEMANEDGLKVVLSGQGADELFGGYARHERIYRERGEEELKKELLKDVYNLYKVNLERDDHCTMANGVELRVPFLDEEVVEIALSIPIEYKMSELSNRPYAESNISLKSEPINGLKNTNLNIKCVRSVRKKILRDVASQYLPDYIAYRPKKAAQYGSGGEKMIYKVAKKYGFSKKRINEFLDMLKRKIVSEF</sequence>
<evidence type="ECO:0000250" key="1"/>
<evidence type="ECO:0000255" key="2">
    <source>
        <dbReference type="PROSITE-ProRule" id="PRU00609"/>
    </source>
</evidence>
<evidence type="ECO:0000305" key="3"/>
<name>ASNH1_METJA</name>
<proteinExistence type="inferred from homology"/>
<dbReference type="EC" id="6.3.5.4"/>
<dbReference type="EMBL" id="L77117">
    <property type="protein sequence ID" value="AAB99117.1"/>
    <property type="status" value="ALT_INIT"/>
    <property type="molecule type" value="Genomic_DNA"/>
</dbReference>
<dbReference type="PIR" id="C64439">
    <property type="entry name" value="C64439"/>
</dbReference>
<dbReference type="RefSeq" id="WP_064496729.1">
    <property type="nucleotide sequence ID" value="NC_000909.1"/>
</dbReference>
<dbReference type="SMR" id="Q58516"/>
<dbReference type="FunCoup" id="Q58516">
    <property type="interactions" value="191"/>
</dbReference>
<dbReference type="STRING" id="243232.MJ_1116"/>
<dbReference type="MEROPS" id="C44.001"/>
<dbReference type="PaxDb" id="243232-MJ_1116"/>
<dbReference type="DNASU" id="1452012"/>
<dbReference type="EnsemblBacteria" id="AAB99117">
    <property type="protein sequence ID" value="AAB99117"/>
    <property type="gene ID" value="MJ_1116"/>
</dbReference>
<dbReference type="GeneID" id="1452012"/>
<dbReference type="KEGG" id="mja:MJ_1116"/>
<dbReference type="eggNOG" id="arCOG00071">
    <property type="taxonomic scope" value="Archaea"/>
</dbReference>
<dbReference type="HOGENOM" id="CLU_014658_4_0_2"/>
<dbReference type="InParanoid" id="Q58516"/>
<dbReference type="OrthoDB" id="8692at2157"/>
<dbReference type="PhylomeDB" id="Q58516"/>
<dbReference type="UniPathway" id="UPA00134">
    <property type="reaction ID" value="UER00195"/>
</dbReference>
<dbReference type="Proteomes" id="UP000000805">
    <property type="component" value="Chromosome"/>
</dbReference>
<dbReference type="GO" id="GO:0005829">
    <property type="term" value="C:cytosol"/>
    <property type="evidence" value="ECO:0000318"/>
    <property type="project" value="GO_Central"/>
</dbReference>
<dbReference type="GO" id="GO:0004066">
    <property type="term" value="F:asparagine synthase (glutamine-hydrolyzing) activity"/>
    <property type="evidence" value="ECO:0000318"/>
    <property type="project" value="GO_Central"/>
</dbReference>
<dbReference type="GO" id="GO:0005524">
    <property type="term" value="F:ATP binding"/>
    <property type="evidence" value="ECO:0007669"/>
    <property type="project" value="UniProtKB-KW"/>
</dbReference>
<dbReference type="GO" id="GO:0006529">
    <property type="term" value="P:asparagine biosynthetic process"/>
    <property type="evidence" value="ECO:0000318"/>
    <property type="project" value="GO_Central"/>
</dbReference>
<dbReference type="GO" id="GO:0070981">
    <property type="term" value="P:L-asparagine biosynthetic process"/>
    <property type="evidence" value="ECO:0007669"/>
    <property type="project" value="UniProtKB-UniPathway"/>
</dbReference>
<dbReference type="CDD" id="cd01991">
    <property type="entry name" value="Asn_synthase_B_C"/>
    <property type="match status" value="1"/>
</dbReference>
<dbReference type="CDD" id="cd00712">
    <property type="entry name" value="AsnB"/>
    <property type="match status" value="1"/>
</dbReference>
<dbReference type="Gene3D" id="3.60.20.10">
    <property type="entry name" value="Glutamine Phosphoribosylpyrophosphate, subunit 1, domain 1"/>
    <property type="match status" value="1"/>
</dbReference>
<dbReference type="Gene3D" id="3.40.50.620">
    <property type="entry name" value="HUPs"/>
    <property type="match status" value="1"/>
</dbReference>
<dbReference type="InterPro" id="IPR006426">
    <property type="entry name" value="Asn_synth_AEB"/>
</dbReference>
<dbReference type="InterPro" id="IPR001962">
    <property type="entry name" value="Asn_synthase"/>
</dbReference>
<dbReference type="InterPro" id="IPR050795">
    <property type="entry name" value="Asn_Synthetase"/>
</dbReference>
<dbReference type="InterPro" id="IPR033738">
    <property type="entry name" value="AsnB_N"/>
</dbReference>
<dbReference type="InterPro" id="IPR017932">
    <property type="entry name" value="GATase_2_dom"/>
</dbReference>
<dbReference type="InterPro" id="IPR029055">
    <property type="entry name" value="Ntn_hydrolases_N"/>
</dbReference>
<dbReference type="InterPro" id="IPR014729">
    <property type="entry name" value="Rossmann-like_a/b/a_fold"/>
</dbReference>
<dbReference type="NCBIfam" id="TIGR01536">
    <property type="entry name" value="asn_synth_AEB"/>
    <property type="match status" value="1"/>
</dbReference>
<dbReference type="PANTHER" id="PTHR11772">
    <property type="entry name" value="ASPARAGINE SYNTHETASE"/>
    <property type="match status" value="1"/>
</dbReference>
<dbReference type="PANTHER" id="PTHR11772:SF2">
    <property type="entry name" value="ASPARAGINE SYNTHETASE [GLUTAMINE-HYDROLYZING]"/>
    <property type="match status" value="1"/>
</dbReference>
<dbReference type="Pfam" id="PF00733">
    <property type="entry name" value="Asn_synthase"/>
    <property type="match status" value="2"/>
</dbReference>
<dbReference type="Pfam" id="PF13537">
    <property type="entry name" value="GATase_7"/>
    <property type="match status" value="1"/>
</dbReference>
<dbReference type="PIRSF" id="PIRSF001589">
    <property type="entry name" value="Asn_synthetase_glu-h"/>
    <property type="match status" value="1"/>
</dbReference>
<dbReference type="SUPFAM" id="SSF52402">
    <property type="entry name" value="Adenine nucleotide alpha hydrolases-like"/>
    <property type="match status" value="1"/>
</dbReference>
<dbReference type="SUPFAM" id="SSF56235">
    <property type="entry name" value="N-terminal nucleophile aminohydrolases (Ntn hydrolases)"/>
    <property type="match status" value="1"/>
</dbReference>
<dbReference type="PROSITE" id="PS51278">
    <property type="entry name" value="GATASE_TYPE_2"/>
    <property type="match status" value="1"/>
</dbReference>
<keyword id="KW-0028">Amino-acid biosynthesis</keyword>
<keyword id="KW-0061">Asparagine biosynthesis</keyword>
<keyword id="KW-0067">ATP-binding</keyword>
<keyword id="KW-0315">Glutamine amidotransferase</keyword>
<keyword id="KW-0436">Ligase</keyword>
<keyword id="KW-0547">Nucleotide-binding</keyword>
<keyword id="KW-1185">Reference proteome</keyword>
<comment type="catalytic activity">
    <reaction>
        <text>L-aspartate + L-glutamine + ATP + H2O = L-asparagine + L-glutamate + AMP + diphosphate + H(+)</text>
        <dbReference type="Rhea" id="RHEA:12228"/>
        <dbReference type="ChEBI" id="CHEBI:15377"/>
        <dbReference type="ChEBI" id="CHEBI:15378"/>
        <dbReference type="ChEBI" id="CHEBI:29985"/>
        <dbReference type="ChEBI" id="CHEBI:29991"/>
        <dbReference type="ChEBI" id="CHEBI:30616"/>
        <dbReference type="ChEBI" id="CHEBI:33019"/>
        <dbReference type="ChEBI" id="CHEBI:58048"/>
        <dbReference type="ChEBI" id="CHEBI:58359"/>
        <dbReference type="ChEBI" id="CHEBI:456215"/>
        <dbReference type="EC" id="6.3.5.4"/>
    </reaction>
</comment>
<comment type="pathway">
    <text>Amino-acid biosynthesis; L-asparagine biosynthesis; L-asparagine from L-aspartate (L-Gln route): step 1/1.</text>
</comment>
<comment type="similarity">
    <text evidence="3">Belongs to the asparagine synthetase family.</text>
</comment>
<comment type="sequence caution" evidence="3">
    <conflict type="erroneous initiation">
        <sequence resource="EMBL-CDS" id="AAB99117"/>
    </conflict>
</comment>
<protein>
    <recommendedName>
        <fullName>Putative asparagine synthetase [glutamine-hydrolyzing] 1</fullName>
        <ecNumber>6.3.5.4</ecNumber>
    </recommendedName>
</protein>
<reference key="1">
    <citation type="journal article" date="1996" name="Science">
        <title>Complete genome sequence of the methanogenic archaeon, Methanococcus jannaschii.</title>
        <authorList>
            <person name="Bult C.J."/>
            <person name="White O."/>
            <person name="Olsen G.J."/>
            <person name="Zhou L."/>
            <person name="Fleischmann R.D."/>
            <person name="Sutton G.G."/>
            <person name="Blake J.A."/>
            <person name="FitzGerald L.M."/>
            <person name="Clayton R.A."/>
            <person name="Gocayne J.D."/>
            <person name="Kerlavage A.R."/>
            <person name="Dougherty B.A."/>
            <person name="Tomb J.-F."/>
            <person name="Adams M.D."/>
            <person name="Reich C.I."/>
            <person name="Overbeek R."/>
            <person name="Kirkness E.F."/>
            <person name="Weinstock K.G."/>
            <person name="Merrick J.M."/>
            <person name="Glodek A."/>
            <person name="Scott J.L."/>
            <person name="Geoghagen N.S.M."/>
            <person name="Weidman J.F."/>
            <person name="Fuhrmann J.L."/>
            <person name="Nguyen D."/>
            <person name="Utterback T.R."/>
            <person name="Kelley J.M."/>
            <person name="Peterson J.D."/>
            <person name="Sadow P.W."/>
            <person name="Hanna M.C."/>
            <person name="Cotton M.D."/>
            <person name="Roberts K.M."/>
            <person name="Hurst M.A."/>
            <person name="Kaine B.P."/>
            <person name="Borodovsky M."/>
            <person name="Klenk H.-P."/>
            <person name="Fraser C.M."/>
            <person name="Smith H.O."/>
            <person name="Woese C.R."/>
            <person name="Venter J.C."/>
        </authorList>
    </citation>
    <scope>NUCLEOTIDE SEQUENCE [LARGE SCALE GENOMIC DNA]</scope>
    <source>
        <strain>ATCC 43067 / DSM 2661 / JAL-1 / JCM 10045 / NBRC 100440</strain>
    </source>
</reference>
<accession>Q58516</accession>
<gene>
    <name type="ordered locus">MJ1116</name>
</gene>